<protein>
    <recommendedName>
        <fullName evidence="1">Small ribosomal subunit protein uS11</fullName>
    </recommendedName>
    <alternativeName>
        <fullName evidence="2">30S ribosomal protein S11</fullName>
    </alternativeName>
</protein>
<dbReference type="EMBL" id="CP000446">
    <property type="protein sequence ID" value="ABI37303.1"/>
    <property type="molecule type" value="Genomic_DNA"/>
</dbReference>
<dbReference type="RefSeq" id="WP_006083577.1">
    <property type="nucleotide sequence ID" value="NC_008321.1"/>
</dbReference>
<dbReference type="SMR" id="Q0HNR4"/>
<dbReference type="GeneID" id="94726209"/>
<dbReference type="KEGG" id="she:Shewmr4_0222"/>
<dbReference type="HOGENOM" id="CLU_072439_5_0_6"/>
<dbReference type="GO" id="GO:1990904">
    <property type="term" value="C:ribonucleoprotein complex"/>
    <property type="evidence" value="ECO:0007669"/>
    <property type="project" value="UniProtKB-KW"/>
</dbReference>
<dbReference type="GO" id="GO:0005840">
    <property type="term" value="C:ribosome"/>
    <property type="evidence" value="ECO:0007669"/>
    <property type="project" value="UniProtKB-KW"/>
</dbReference>
<dbReference type="GO" id="GO:0019843">
    <property type="term" value="F:rRNA binding"/>
    <property type="evidence" value="ECO:0007669"/>
    <property type="project" value="UniProtKB-UniRule"/>
</dbReference>
<dbReference type="GO" id="GO:0003735">
    <property type="term" value="F:structural constituent of ribosome"/>
    <property type="evidence" value="ECO:0007669"/>
    <property type="project" value="InterPro"/>
</dbReference>
<dbReference type="GO" id="GO:0006412">
    <property type="term" value="P:translation"/>
    <property type="evidence" value="ECO:0007669"/>
    <property type="project" value="UniProtKB-UniRule"/>
</dbReference>
<dbReference type="FunFam" id="3.30.420.80:FF:000001">
    <property type="entry name" value="30S ribosomal protein S11"/>
    <property type="match status" value="1"/>
</dbReference>
<dbReference type="Gene3D" id="3.30.420.80">
    <property type="entry name" value="Ribosomal protein S11"/>
    <property type="match status" value="1"/>
</dbReference>
<dbReference type="HAMAP" id="MF_01310">
    <property type="entry name" value="Ribosomal_uS11"/>
    <property type="match status" value="1"/>
</dbReference>
<dbReference type="InterPro" id="IPR001971">
    <property type="entry name" value="Ribosomal_uS11"/>
</dbReference>
<dbReference type="InterPro" id="IPR019981">
    <property type="entry name" value="Ribosomal_uS11_bac-type"/>
</dbReference>
<dbReference type="InterPro" id="IPR018102">
    <property type="entry name" value="Ribosomal_uS11_CS"/>
</dbReference>
<dbReference type="InterPro" id="IPR036967">
    <property type="entry name" value="Ribosomal_uS11_sf"/>
</dbReference>
<dbReference type="NCBIfam" id="NF003698">
    <property type="entry name" value="PRK05309.1"/>
    <property type="match status" value="1"/>
</dbReference>
<dbReference type="NCBIfam" id="TIGR03632">
    <property type="entry name" value="uS11_bact"/>
    <property type="match status" value="1"/>
</dbReference>
<dbReference type="PANTHER" id="PTHR11759">
    <property type="entry name" value="40S RIBOSOMAL PROTEIN S14/30S RIBOSOMAL PROTEIN S11"/>
    <property type="match status" value="1"/>
</dbReference>
<dbReference type="Pfam" id="PF00411">
    <property type="entry name" value="Ribosomal_S11"/>
    <property type="match status" value="1"/>
</dbReference>
<dbReference type="PIRSF" id="PIRSF002131">
    <property type="entry name" value="Ribosomal_S11"/>
    <property type="match status" value="1"/>
</dbReference>
<dbReference type="SUPFAM" id="SSF53137">
    <property type="entry name" value="Translational machinery components"/>
    <property type="match status" value="1"/>
</dbReference>
<dbReference type="PROSITE" id="PS00054">
    <property type="entry name" value="RIBOSOMAL_S11"/>
    <property type="match status" value="1"/>
</dbReference>
<name>RS11_SHESM</name>
<comment type="function">
    <text evidence="1">Located on the platform of the 30S subunit, it bridges several disparate RNA helices of the 16S rRNA. Forms part of the Shine-Dalgarno cleft in the 70S ribosome.</text>
</comment>
<comment type="subunit">
    <text evidence="1">Part of the 30S ribosomal subunit. Interacts with proteins S7 and S18. Binds to IF-3.</text>
</comment>
<comment type="similarity">
    <text evidence="1">Belongs to the universal ribosomal protein uS11 family.</text>
</comment>
<gene>
    <name evidence="1" type="primary">rpsK</name>
    <name type="ordered locus">Shewmr4_0222</name>
</gene>
<evidence type="ECO:0000255" key="1">
    <source>
        <dbReference type="HAMAP-Rule" id="MF_01310"/>
    </source>
</evidence>
<evidence type="ECO:0000305" key="2"/>
<reference key="1">
    <citation type="submission" date="2006-08" db="EMBL/GenBank/DDBJ databases">
        <title>Complete sequence of Shewanella sp. MR-4.</title>
        <authorList>
            <consortium name="US DOE Joint Genome Institute"/>
            <person name="Copeland A."/>
            <person name="Lucas S."/>
            <person name="Lapidus A."/>
            <person name="Barry K."/>
            <person name="Detter J.C."/>
            <person name="Glavina del Rio T."/>
            <person name="Hammon N."/>
            <person name="Israni S."/>
            <person name="Dalin E."/>
            <person name="Tice H."/>
            <person name="Pitluck S."/>
            <person name="Kiss H."/>
            <person name="Brettin T."/>
            <person name="Bruce D."/>
            <person name="Han C."/>
            <person name="Tapia R."/>
            <person name="Gilna P."/>
            <person name="Schmutz J."/>
            <person name="Larimer F."/>
            <person name="Land M."/>
            <person name="Hauser L."/>
            <person name="Kyrpides N."/>
            <person name="Mikhailova N."/>
            <person name="Nealson K."/>
            <person name="Konstantinidis K."/>
            <person name="Klappenbach J."/>
            <person name="Tiedje J."/>
            <person name="Richardson P."/>
        </authorList>
    </citation>
    <scope>NUCLEOTIDE SEQUENCE [LARGE SCALE GENOMIC DNA]</scope>
    <source>
        <strain>MR-4</strain>
    </source>
</reference>
<feature type="chain" id="PRO_0000294853" description="Small ribosomal subunit protein uS11">
    <location>
        <begin position="1"/>
        <end position="130"/>
    </location>
</feature>
<organism>
    <name type="scientific">Shewanella sp. (strain MR-4)</name>
    <dbReference type="NCBI Taxonomy" id="60480"/>
    <lineage>
        <taxon>Bacteria</taxon>
        <taxon>Pseudomonadati</taxon>
        <taxon>Pseudomonadota</taxon>
        <taxon>Gammaproteobacteria</taxon>
        <taxon>Alteromonadales</taxon>
        <taxon>Shewanellaceae</taxon>
        <taxon>Shewanella</taxon>
    </lineage>
</organism>
<accession>Q0HNR4</accession>
<sequence>MAKVPSRSPRKRVRKQVADGMAHIHASFNNTIVTITDRQGNALSWATSGGSGFRGSRKSTPFAAQVAAERAGAAAQDYGLKNLEVFVKGPGPGRESAIRALNAVGYKITNITDVTPIPHNGCRPPKKRRV</sequence>
<keyword id="KW-0687">Ribonucleoprotein</keyword>
<keyword id="KW-0689">Ribosomal protein</keyword>
<keyword id="KW-0694">RNA-binding</keyword>
<keyword id="KW-0699">rRNA-binding</keyword>
<proteinExistence type="inferred from homology"/>